<proteinExistence type="evidence at transcript level"/>
<feature type="chain" id="PRO_0000291932" description="Protein Abitram">
    <location>
        <begin position="1"/>
        <end position="177"/>
    </location>
</feature>
<dbReference type="EMBL" id="BX957315">
    <property type="protein sequence ID" value="CAK04782.1"/>
    <property type="molecule type" value="Genomic_DNA"/>
</dbReference>
<dbReference type="EMBL" id="BX927389">
    <property type="protein sequence ID" value="CAK04782.1"/>
    <property type="status" value="JOINED"/>
    <property type="molecule type" value="Genomic_DNA"/>
</dbReference>
<dbReference type="EMBL" id="BX927389">
    <property type="protein sequence ID" value="CAK05340.1"/>
    <property type="molecule type" value="Genomic_DNA"/>
</dbReference>
<dbReference type="EMBL" id="BX957315">
    <property type="protein sequence ID" value="CAK05340.1"/>
    <property type="status" value="JOINED"/>
    <property type="molecule type" value="Genomic_DNA"/>
</dbReference>
<dbReference type="EMBL" id="BC125852">
    <property type="protein sequence ID" value="AAI25853.1"/>
    <property type="molecule type" value="mRNA"/>
</dbReference>
<dbReference type="RefSeq" id="NP_001038394.1">
    <property type="nucleotide sequence ID" value="NM_001044929.3"/>
</dbReference>
<dbReference type="SMR" id="Q1LU93"/>
<dbReference type="FunCoup" id="Q1LU93">
    <property type="interactions" value="1067"/>
</dbReference>
<dbReference type="STRING" id="7955.ENSDARP00000094053"/>
<dbReference type="PaxDb" id="7955-ENSDARP00000094053"/>
<dbReference type="Ensembl" id="ENSDART00000103276">
    <property type="protein sequence ID" value="ENSDARP00000094053"/>
    <property type="gene ID" value="ENSDARG00000070407"/>
</dbReference>
<dbReference type="GeneID" id="560419"/>
<dbReference type="KEGG" id="dre:560419"/>
<dbReference type="AGR" id="ZFIN:ZDB-GENE-060503-602"/>
<dbReference type="CTD" id="54942"/>
<dbReference type="ZFIN" id="ZDB-GENE-060503-602">
    <property type="gene designation" value="abitram"/>
</dbReference>
<dbReference type="eggNOG" id="KOG3266">
    <property type="taxonomic scope" value="Eukaryota"/>
</dbReference>
<dbReference type="HOGENOM" id="CLU_107323_1_0_1"/>
<dbReference type="InParanoid" id="Q1LU93"/>
<dbReference type="OMA" id="GKACEDH"/>
<dbReference type="OrthoDB" id="48130at2759"/>
<dbReference type="PhylomeDB" id="Q1LU93"/>
<dbReference type="TreeFam" id="TF313930"/>
<dbReference type="PRO" id="PR:Q1LU93"/>
<dbReference type="Proteomes" id="UP000000437">
    <property type="component" value="Chromosome 19"/>
</dbReference>
<dbReference type="Bgee" id="ENSDARG00000070407">
    <property type="expression patterns" value="Expressed in gastrula and 21 other cell types or tissues"/>
</dbReference>
<dbReference type="GO" id="GO:0030425">
    <property type="term" value="C:dendrite"/>
    <property type="evidence" value="ECO:0000318"/>
    <property type="project" value="GO_Central"/>
</dbReference>
<dbReference type="GO" id="GO:0032433">
    <property type="term" value="C:filopodium tip"/>
    <property type="evidence" value="ECO:0000250"/>
    <property type="project" value="UniProtKB"/>
</dbReference>
<dbReference type="GO" id="GO:0030426">
    <property type="term" value="C:growth cone"/>
    <property type="evidence" value="ECO:0000250"/>
    <property type="project" value="UniProtKB"/>
</dbReference>
<dbReference type="GO" id="GO:0030027">
    <property type="term" value="C:lamellipodium"/>
    <property type="evidence" value="ECO:0000250"/>
    <property type="project" value="UniProtKB"/>
</dbReference>
<dbReference type="GO" id="GO:0016607">
    <property type="term" value="C:nuclear speck"/>
    <property type="evidence" value="ECO:0007669"/>
    <property type="project" value="UniProtKB-SubCell"/>
</dbReference>
<dbReference type="GO" id="GO:0005634">
    <property type="term" value="C:nucleus"/>
    <property type="evidence" value="ECO:0000318"/>
    <property type="project" value="GO_Central"/>
</dbReference>
<dbReference type="GO" id="GO:0051015">
    <property type="term" value="F:actin filament binding"/>
    <property type="evidence" value="ECO:0000318"/>
    <property type="project" value="GO_Central"/>
</dbReference>
<dbReference type="GO" id="GO:0003785">
    <property type="term" value="F:actin monomer binding"/>
    <property type="evidence" value="ECO:0000318"/>
    <property type="project" value="GO_Central"/>
</dbReference>
<dbReference type="GO" id="GO:0048813">
    <property type="term" value="P:dendrite morphogenesis"/>
    <property type="evidence" value="ECO:0000250"/>
    <property type="project" value="UniProtKB"/>
</dbReference>
<dbReference type="GO" id="GO:0030833">
    <property type="term" value="P:regulation of actin filament polymerization"/>
    <property type="evidence" value="ECO:0000250"/>
    <property type="project" value="UniProtKB"/>
</dbReference>
<dbReference type="GO" id="GO:0051489">
    <property type="term" value="P:regulation of filopodium assembly"/>
    <property type="evidence" value="ECO:0000250"/>
    <property type="project" value="UniProtKB"/>
</dbReference>
<dbReference type="FunFam" id="2.40.50.100:FF:000048">
    <property type="entry name" value="Protein Abitram"/>
    <property type="match status" value="1"/>
</dbReference>
<dbReference type="Gene3D" id="2.40.50.100">
    <property type="match status" value="1"/>
</dbReference>
<dbReference type="InterPro" id="IPR039169">
    <property type="entry name" value="Abitram"/>
</dbReference>
<dbReference type="InterPro" id="IPR033753">
    <property type="entry name" value="GCV_H/Fam206"/>
</dbReference>
<dbReference type="InterPro" id="IPR011053">
    <property type="entry name" value="Single_hybrid_motif"/>
</dbReference>
<dbReference type="PANTHER" id="PTHR13651">
    <property type="entry name" value="PROTEIN ABITRAM"/>
    <property type="match status" value="1"/>
</dbReference>
<dbReference type="PANTHER" id="PTHR13651:SF0">
    <property type="entry name" value="PROTEIN ABITRAM"/>
    <property type="match status" value="1"/>
</dbReference>
<dbReference type="Pfam" id="PF01597">
    <property type="entry name" value="GCV_H"/>
    <property type="match status" value="1"/>
</dbReference>
<dbReference type="SUPFAM" id="SSF51230">
    <property type="entry name" value="Single hybrid motif"/>
    <property type="match status" value="1"/>
</dbReference>
<evidence type="ECO:0000250" key="1">
    <source>
        <dbReference type="UniProtKB" id="Q80ZQ9"/>
    </source>
</evidence>
<evidence type="ECO:0000305" key="2"/>
<gene>
    <name type="primary">abitram</name>
    <name type="synonym">fam206a</name>
    <name type="ORF">si:ch211-254e15.2</name>
    <name type="ORF">zgc:153072</name>
</gene>
<protein>
    <recommendedName>
        <fullName evidence="2">Protein Abitram</fullName>
    </recommendedName>
    <alternativeName>
        <fullName>Actin-binding transcription modulator</fullName>
    </alternativeName>
    <alternativeName>
        <fullName>Protein Simiate</fullName>
    </alternativeName>
</protein>
<name>ABITM_DANRE</name>
<sequence length="177" mass="20504">MEDKEEKKAPSVIDRYFTRWYRTDLKGKPCEDHCILQHSNRICVITLAESHPIFQNGRKIKNINYQISDGCSRLKNKVSGKSKRGGQFLTEFAPLCRITCTDEQEFTIFSCIRGRLLEVNEVILNKPDLLMEKPSTEGYIAVILPKFEESKSVTEGLLTREQYEEILTKRNQQEVPC</sequence>
<reference key="1">
    <citation type="journal article" date="2013" name="Nature">
        <title>The zebrafish reference genome sequence and its relationship to the human genome.</title>
        <authorList>
            <person name="Howe K."/>
            <person name="Clark M.D."/>
            <person name="Torroja C.F."/>
            <person name="Torrance J."/>
            <person name="Berthelot C."/>
            <person name="Muffato M."/>
            <person name="Collins J.E."/>
            <person name="Humphray S."/>
            <person name="McLaren K."/>
            <person name="Matthews L."/>
            <person name="McLaren S."/>
            <person name="Sealy I."/>
            <person name="Caccamo M."/>
            <person name="Churcher C."/>
            <person name="Scott C."/>
            <person name="Barrett J.C."/>
            <person name="Koch R."/>
            <person name="Rauch G.J."/>
            <person name="White S."/>
            <person name="Chow W."/>
            <person name="Kilian B."/>
            <person name="Quintais L.T."/>
            <person name="Guerra-Assuncao J.A."/>
            <person name="Zhou Y."/>
            <person name="Gu Y."/>
            <person name="Yen J."/>
            <person name="Vogel J.H."/>
            <person name="Eyre T."/>
            <person name="Redmond S."/>
            <person name="Banerjee R."/>
            <person name="Chi J."/>
            <person name="Fu B."/>
            <person name="Langley E."/>
            <person name="Maguire S.F."/>
            <person name="Laird G.K."/>
            <person name="Lloyd D."/>
            <person name="Kenyon E."/>
            <person name="Donaldson S."/>
            <person name="Sehra H."/>
            <person name="Almeida-King J."/>
            <person name="Loveland J."/>
            <person name="Trevanion S."/>
            <person name="Jones M."/>
            <person name="Quail M."/>
            <person name="Willey D."/>
            <person name="Hunt A."/>
            <person name="Burton J."/>
            <person name="Sims S."/>
            <person name="McLay K."/>
            <person name="Plumb B."/>
            <person name="Davis J."/>
            <person name="Clee C."/>
            <person name="Oliver K."/>
            <person name="Clark R."/>
            <person name="Riddle C."/>
            <person name="Elliot D."/>
            <person name="Threadgold G."/>
            <person name="Harden G."/>
            <person name="Ware D."/>
            <person name="Begum S."/>
            <person name="Mortimore B."/>
            <person name="Kerry G."/>
            <person name="Heath P."/>
            <person name="Phillimore B."/>
            <person name="Tracey A."/>
            <person name="Corby N."/>
            <person name="Dunn M."/>
            <person name="Johnson C."/>
            <person name="Wood J."/>
            <person name="Clark S."/>
            <person name="Pelan S."/>
            <person name="Griffiths G."/>
            <person name="Smith M."/>
            <person name="Glithero R."/>
            <person name="Howden P."/>
            <person name="Barker N."/>
            <person name="Lloyd C."/>
            <person name="Stevens C."/>
            <person name="Harley J."/>
            <person name="Holt K."/>
            <person name="Panagiotidis G."/>
            <person name="Lovell J."/>
            <person name="Beasley H."/>
            <person name="Henderson C."/>
            <person name="Gordon D."/>
            <person name="Auger K."/>
            <person name="Wright D."/>
            <person name="Collins J."/>
            <person name="Raisen C."/>
            <person name="Dyer L."/>
            <person name="Leung K."/>
            <person name="Robertson L."/>
            <person name="Ambridge K."/>
            <person name="Leongamornlert D."/>
            <person name="McGuire S."/>
            <person name="Gilderthorp R."/>
            <person name="Griffiths C."/>
            <person name="Manthravadi D."/>
            <person name="Nichol S."/>
            <person name="Barker G."/>
            <person name="Whitehead S."/>
            <person name="Kay M."/>
            <person name="Brown J."/>
            <person name="Murnane C."/>
            <person name="Gray E."/>
            <person name="Humphries M."/>
            <person name="Sycamore N."/>
            <person name="Barker D."/>
            <person name="Saunders D."/>
            <person name="Wallis J."/>
            <person name="Babbage A."/>
            <person name="Hammond S."/>
            <person name="Mashreghi-Mohammadi M."/>
            <person name="Barr L."/>
            <person name="Martin S."/>
            <person name="Wray P."/>
            <person name="Ellington A."/>
            <person name="Matthews N."/>
            <person name="Ellwood M."/>
            <person name="Woodmansey R."/>
            <person name="Clark G."/>
            <person name="Cooper J."/>
            <person name="Tromans A."/>
            <person name="Grafham D."/>
            <person name="Skuce C."/>
            <person name="Pandian R."/>
            <person name="Andrews R."/>
            <person name="Harrison E."/>
            <person name="Kimberley A."/>
            <person name="Garnett J."/>
            <person name="Fosker N."/>
            <person name="Hall R."/>
            <person name="Garner P."/>
            <person name="Kelly D."/>
            <person name="Bird C."/>
            <person name="Palmer S."/>
            <person name="Gehring I."/>
            <person name="Berger A."/>
            <person name="Dooley C.M."/>
            <person name="Ersan-Urun Z."/>
            <person name="Eser C."/>
            <person name="Geiger H."/>
            <person name="Geisler M."/>
            <person name="Karotki L."/>
            <person name="Kirn A."/>
            <person name="Konantz J."/>
            <person name="Konantz M."/>
            <person name="Oberlander M."/>
            <person name="Rudolph-Geiger S."/>
            <person name="Teucke M."/>
            <person name="Lanz C."/>
            <person name="Raddatz G."/>
            <person name="Osoegawa K."/>
            <person name="Zhu B."/>
            <person name="Rapp A."/>
            <person name="Widaa S."/>
            <person name="Langford C."/>
            <person name="Yang F."/>
            <person name="Schuster S.C."/>
            <person name="Carter N.P."/>
            <person name="Harrow J."/>
            <person name="Ning Z."/>
            <person name="Herrero J."/>
            <person name="Searle S.M."/>
            <person name="Enright A."/>
            <person name="Geisler R."/>
            <person name="Plasterk R.H."/>
            <person name="Lee C."/>
            <person name="Westerfield M."/>
            <person name="de Jong P.J."/>
            <person name="Zon L.I."/>
            <person name="Postlethwait J.H."/>
            <person name="Nusslein-Volhard C."/>
            <person name="Hubbard T.J."/>
            <person name="Roest Crollius H."/>
            <person name="Rogers J."/>
            <person name="Stemple D.L."/>
        </authorList>
    </citation>
    <scope>NUCLEOTIDE SEQUENCE [LARGE SCALE GENOMIC DNA]</scope>
    <source>
        <strain>Tuebingen</strain>
    </source>
</reference>
<reference key="2">
    <citation type="submission" date="2006-10" db="EMBL/GenBank/DDBJ databases">
        <authorList>
            <consortium name="NIH - Zebrafish Genes Collection (ZGC) project"/>
        </authorList>
    </citation>
    <scope>NUCLEOTIDE SEQUENCE [LARGE SCALE MRNA]</scope>
    <source>
        <tissue>Olfactory epithelium</tissue>
    </source>
</reference>
<keyword id="KW-0966">Cell projection</keyword>
<keyword id="KW-0539">Nucleus</keyword>
<keyword id="KW-1185">Reference proteome</keyword>
<accession>Q1LU93</accession>
<comment type="function">
    <text evidence="1">May regulate actin polymerization, filopodia dynamics and arborization of neurons.</text>
</comment>
<comment type="subcellular location">
    <subcellularLocation>
        <location evidence="1">Nucleus speckle</location>
    </subcellularLocation>
    <subcellularLocation>
        <location evidence="1">Cell projection</location>
        <location evidence="1">Lamellipodium</location>
    </subcellularLocation>
    <subcellularLocation>
        <location evidence="1">Nucleus</location>
    </subcellularLocation>
    <subcellularLocation>
        <location evidence="1">Cell projection</location>
        <location evidence="1">Growth cone</location>
    </subcellularLocation>
    <subcellularLocation>
        <location evidence="1">Cell projection</location>
        <location evidence="1">Dendrite</location>
    </subcellularLocation>
    <text evidence="1">Localizes to somata and dendrites in cortical neurons.</text>
</comment>
<comment type="similarity">
    <text evidence="2">Belongs to the ABITRAM family.</text>
</comment>
<organism>
    <name type="scientific">Danio rerio</name>
    <name type="common">Zebrafish</name>
    <name type="synonym">Brachydanio rerio</name>
    <dbReference type="NCBI Taxonomy" id="7955"/>
    <lineage>
        <taxon>Eukaryota</taxon>
        <taxon>Metazoa</taxon>
        <taxon>Chordata</taxon>
        <taxon>Craniata</taxon>
        <taxon>Vertebrata</taxon>
        <taxon>Euteleostomi</taxon>
        <taxon>Actinopterygii</taxon>
        <taxon>Neopterygii</taxon>
        <taxon>Teleostei</taxon>
        <taxon>Ostariophysi</taxon>
        <taxon>Cypriniformes</taxon>
        <taxon>Danionidae</taxon>
        <taxon>Danioninae</taxon>
        <taxon>Danio</taxon>
    </lineage>
</organism>